<sequence>FDLGMLVKKVLAGL</sequence>
<dbReference type="GO" id="GO:0005576">
    <property type="term" value="C:extracellular region"/>
    <property type="evidence" value="ECO:0007669"/>
    <property type="project" value="UniProtKB-SubCell"/>
</dbReference>
<dbReference type="GO" id="GO:0016020">
    <property type="term" value="C:membrane"/>
    <property type="evidence" value="ECO:0007669"/>
    <property type="project" value="UniProtKB-KW"/>
</dbReference>
<dbReference type="GO" id="GO:0044218">
    <property type="term" value="C:other organism cell membrane"/>
    <property type="evidence" value="ECO:0007669"/>
    <property type="project" value="UniProtKB-KW"/>
</dbReference>
<feature type="peptide" id="PRO_0000458779" description="Eumenine mastoparan-EM4" evidence="2">
    <location>
        <begin position="1"/>
        <end position="14"/>
    </location>
</feature>
<feature type="modified residue" description="Leucine amide" evidence="2">
    <location>
        <position position="14"/>
    </location>
</feature>
<accession>P0DX34</accession>
<name>MAST4_EUMMI</name>
<protein>
    <recommendedName>
        <fullName evidence="3">Eumenine mastoparan-EM4</fullName>
        <shortName evidence="3">EMP-EM4</shortName>
    </recommendedName>
</protein>
<comment type="function">
    <text evidence="1">Antimicrobial peptide with activity against Gram-negative and Gram-positive bacteria, as well as against fungi. Has potent hemolytic activity against erythrocytes.</text>
</comment>
<comment type="subcellular location">
    <subcellularLocation>
        <location evidence="2">Secreted</location>
    </subcellularLocation>
    <subcellularLocation>
        <location evidence="4">Target cell membrane</location>
    </subcellularLocation>
    <text evidence="5">Has an amphipathic alpha-helical conformation.</text>
</comment>
<comment type="tissue specificity">
    <text evidence="5">Expressed by the venom gland.</text>
</comment>
<comment type="mass spectrometry"/>
<comment type="similarity">
    <text evidence="4">Belongs to the MCD family. Mastoparan subfamily.</text>
</comment>
<reference key="1">
    <citation type="journal article" date="2019" name="Toxins">
        <title>New mastoparan peptides in the venom of the solitary Eumenine wasp Eumenes micado.</title>
        <authorList>
            <person name="Konno K."/>
            <person name="Kazuma K."/>
            <person name="Rangel M."/>
            <person name="Stolarz-de-Oliveira J."/>
            <person name="Fontana R."/>
            <person name="Kawano M."/>
            <person name="Fuchino H."/>
            <person name="Hide I."/>
            <person name="Yasuhara T."/>
            <person name="Nakata Y."/>
        </authorList>
    </citation>
    <scope>PROTEIN SEQUENCE</scope>
    <scope>AMIDATION AT LEU-14</scope>
    <scope>MASS SPECTROMETRY</scope>
    <scope>SUBCELLULAR LOCATION</scope>
    <source>
        <tissue>Venom</tissue>
    </source>
</reference>
<organism>
    <name type="scientific">Eumenes micado</name>
    <name type="common">Potter wasp</name>
    <dbReference type="NCBI Taxonomy" id="2597558"/>
    <lineage>
        <taxon>Eukaryota</taxon>
        <taxon>Metazoa</taxon>
        <taxon>Ecdysozoa</taxon>
        <taxon>Arthropoda</taxon>
        <taxon>Hexapoda</taxon>
        <taxon>Insecta</taxon>
        <taxon>Pterygota</taxon>
        <taxon>Neoptera</taxon>
        <taxon>Endopterygota</taxon>
        <taxon>Hymenoptera</taxon>
        <taxon>Apocrita</taxon>
        <taxon>Aculeata</taxon>
        <taxon>Vespoidea</taxon>
        <taxon>Vespidae</taxon>
        <taxon>Eumeninae</taxon>
        <taxon>Eumenes</taxon>
    </lineage>
</organism>
<proteinExistence type="evidence at protein level"/>
<evidence type="ECO:0000250" key="1">
    <source>
        <dbReference type="UniProtKB" id="D1MEI8"/>
    </source>
</evidence>
<evidence type="ECO:0000269" key="2">
    <source>
    </source>
</evidence>
<evidence type="ECO:0000303" key="3">
    <source>
    </source>
</evidence>
<evidence type="ECO:0000305" key="4"/>
<evidence type="ECO:0000305" key="5">
    <source>
    </source>
</evidence>
<keyword id="KW-0027">Amidation</keyword>
<keyword id="KW-0903">Direct protein sequencing</keyword>
<keyword id="KW-0472">Membrane</keyword>
<keyword id="KW-0964">Secreted</keyword>
<keyword id="KW-1052">Target cell membrane</keyword>
<keyword id="KW-1053">Target membrane</keyword>